<reference key="1">
    <citation type="submission" date="1999-04" db="EMBL/GenBank/DDBJ databases">
        <title>Macaca fuscata glutathione transferase M3.</title>
        <authorList>
            <person name="Beuckmann C.T."/>
            <person name="Fujimori K."/>
            <person name="Urade Y."/>
        </authorList>
    </citation>
    <scope>NUCLEOTIDE SEQUENCE [MRNA]</scope>
</reference>
<sequence length="225" mass="26604">MSCESSMVLGYWDIRGLAHAIRLLLEFTDTSYEEKRYTCGEAPDYDRSQWLDVKFKLDLDFPNLPYLMDGKNKITQSNAILRYIARKHNMCGETEEEKIRVDIIENQVMDFRTQLIRLCYSSDHEKLKPQYLEELPGQLKQFSVFLGKFSWFAGEKLTFVDFLTYDILDQNRIFEPKCLDEFPNLKAFMCRFEALEKIAAYIQSDQFFKMPINNKMAQWGNKPVC</sequence>
<dbReference type="EC" id="2.5.1.18"/>
<dbReference type="EMBL" id="AB025800">
    <property type="protein sequence ID" value="BAB40443.1"/>
    <property type="molecule type" value="mRNA"/>
</dbReference>
<dbReference type="SMR" id="Q9BEA9"/>
<dbReference type="GO" id="GO:0005737">
    <property type="term" value="C:cytoplasm"/>
    <property type="evidence" value="ECO:0007669"/>
    <property type="project" value="UniProtKB-SubCell"/>
</dbReference>
<dbReference type="GO" id="GO:0045171">
    <property type="term" value="C:intercellular bridge"/>
    <property type="evidence" value="ECO:0007669"/>
    <property type="project" value="UniProtKB-ARBA"/>
</dbReference>
<dbReference type="GO" id="GO:0004364">
    <property type="term" value="F:glutathione transferase activity"/>
    <property type="evidence" value="ECO:0000250"/>
    <property type="project" value="UniProtKB"/>
</dbReference>
<dbReference type="GO" id="GO:0006749">
    <property type="term" value="P:glutathione metabolic process"/>
    <property type="evidence" value="ECO:0000250"/>
    <property type="project" value="UniProtKB"/>
</dbReference>
<dbReference type="CDD" id="cd03209">
    <property type="entry name" value="GST_C_Mu"/>
    <property type="match status" value="1"/>
</dbReference>
<dbReference type="CDD" id="cd03075">
    <property type="entry name" value="GST_N_Mu"/>
    <property type="match status" value="1"/>
</dbReference>
<dbReference type="FunFam" id="1.20.1050.10:FF:000003">
    <property type="entry name" value="Glutathione S-transferase 2"/>
    <property type="match status" value="1"/>
</dbReference>
<dbReference type="FunFam" id="3.40.30.10:FF:000603">
    <property type="entry name" value="Glutathione S-transferase Mu 1"/>
    <property type="match status" value="1"/>
</dbReference>
<dbReference type="Gene3D" id="1.20.1050.10">
    <property type="match status" value="1"/>
</dbReference>
<dbReference type="Gene3D" id="3.40.30.10">
    <property type="entry name" value="Glutaredoxin"/>
    <property type="match status" value="1"/>
</dbReference>
<dbReference type="InterPro" id="IPR010987">
    <property type="entry name" value="Glutathione-S-Trfase_C-like"/>
</dbReference>
<dbReference type="InterPro" id="IPR036282">
    <property type="entry name" value="Glutathione-S-Trfase_C_sf"/>
</dbReference>
<dbReference type="InterPro" id="IPR004045">
    <property type="entry name" value="Glutathione_S-Trfase_N"/>
</dbReference>
<dbReference type="InterPro" id="IPR004046">
    <property type="entry name" value="GST_C"/>
</dbReference>
<dbReference type="InterPro" id="IPR003081">
    <property type="entry name" value="GST_mu"/>
</dbReference>
<dbReference type="InterPro" id="IPR050213">
    <property type="entry name" value="GST_superfamily"/>
</dbReference>
<dbReference type="InterPro" id="IPR036249">
    <property type="entry name" value="Thioredoxin-like_sf"/>
</dbReference>
<dbReference type="PANTHER" id="PTHR11571">
    <property type="entry name" value="GLUTATHIONE S-TRANSFERASE"/>
    <property type="match status" value="1"/>
</dbReference>
<dbReference type="PANTHER" id="PTHR11571:SF133">
    <property type="entry name" value="GLUTATHIONE S-TRANSFERASE MU 3"/>
    <property type="match status" value="1"/>
</dbReference>
<dbReference type="Pfam" id="PF00043">
    <property type="entry name" value="GST_C"/>
    <property type="match status" value="1"/>
</dbReference>
<dbReference type="Pfam" id="PF02798">
    <property type="entry name" value="GST_N"/>
    <property type="match status" value="1"/>
</dbReference>
<dbReference type="PRINTS" id="PR01267">
    <property type="entry name" value="GSTRNSFRASEM"/>
</dbReference>
<dbReference type="SFLD" id="SFLDG01205">
    <property type="entry name" value="AMPS.1"/>
    <property type="match status" value="1"/>
</dbReference>
<dbReference type="SFLD" id="SFLDG00363">
    <property type="entry name" value="AMPS_(cytGST):_Alpha-__Mu-__Pi"/>
    <property type="match status" value="1"/>
</dbReference>
<dbReference type="SUPFAM" id="SSF47616">
    <property type="entry name" value="GST C-terminal domain-like"/>
    <property type="match status" value="1"/>
</dbReference>
<dbReference type="SUPFAM" id="SSF52833">
    <property type="entry name" value="Thioredoxin-like"/>
    <property type="match status" value="1"/>
</dbReference>
<dbReference type="PROSITE" id="PS50405">
    <property type="entry name" value="GST_CTER"/>
    <property type="match status" value="1"/>
</dbReference>
<dbReference type="PROSITE" id="PS50404">
    <property type="entry name" value="GST_NTER"/>
    <property type="match status" value="1"/>
</dbReference>
<gene>
    <name type="primary">GSTM3</name>
</gene>
<name>GSTM3_MACFU</name>
<accession>Q9BEA9</accession>
<feature type="chain" id="PRO_0000185823" description="Glutathione S-transferase Mu 3">
    <location>
        <begin position="1"/>
        <end position="225"/>
    </location>
</feature>
<feature type="domain" description="GST N-terminal">
    <location>
        <begin position="5"/>
        <end position="92"/>
    </location>
</feature>
<feature type="domain" description="GST C-terminal">
    <location>
        <begin position="94"/>
        <end position="212"/>
    </location>
</feature>
<feature type="binding site" evidence="2">
    <location>
        <begin position="11"/>
        <end position="12"/>
    </location>
    <ligand>
        <name>glutathione</name>
        <dbReference type="ChEBI" id="CHEBI:57925"/>
    </ligand>
</feature>
<feature type="binding site" evidence="2">
    <location>
        <begin position="50"/>
        <end position="54"/>
    </location>
    <ligand>
        <name>glutathione</name>
        <dbReference type="ChEBI" id="CHEBI:57925"/>
    </ligand>
</feature>
<feature type="binding site" evidence="2">
    <location>
        <begin position="63"/>
        <end position="64"/>
    </location>
    <ligand>
        <name>glutathione</name>
        <dbReference type="ChEBI" id="CHEBI:57925"/>
    </ligand>
</feature>
<feature type="binding site" evidence="2">
    <location>
        <begin position="76"/>
        <end position="77"/>
    </location>
    <ligand>
        <name>glutathione</name>
        <dbReference type="ChEBI" id="CHEBI:57925"/>
    </ligand>
</feature>
<feature type="binding site" evidence="1">
    <location>
        <position position="120"/>
    </location>
    <ligand>
        <name>substrate</name>
    </ligand>
</feature>
<feature type="cross-link" description="Glycyl lysine isopeptide (Lys-Gly) (interchain with G-Cter in SUMO2)" evidence="3">
    <location>
        <position position="54"/>
    </location>
</feature>
<feature type="cross-link" description="Glycyl lysine isopeptide (Lys-Gly) (interchain with G-Cter in SUMO2)" evidence="3">
    <location>
        <position position="73"/>
    </location>
</feature>
<protein>
    <recommendedName>
        <fullName>Glutathione S-transferase Mu 3</fullName>
        <ecNumber>2.5.1.18</ecNumber>
    </recommendedName>
    <alternativeName>
        <fullName>GST class-mu 3</fullName>
    </alternativeName>
    <alternativeName>
        <fullName>GSTM3-3</fullName>
    </alternativeName>
</protein>
<organism>
    <name type="scientific">Macaca fuscata fuscata</name>
    <name type="common">Japanese macaque</name>
    <dbReference type="NCBI Taxonomy" id="9543"/>
    <lineage>
        <taxon>Eukaryota</taxon>
        <taxon>Metazoa</taxon>
        <taxon>Chordata</taxon>
        <taxon>Craniata</taxon>
        <taxon>Vertebrata</taxon>
        <taxon>Euteleostomi</taxon>
        <taxon>Mammalia</taxon>
        <taxon>Eutheria</taxon>
        <taxon>Euarchontoglires</taxon>
        <taxon>Primates</taxon>
        <taxon>Haplorrhini</taxon>
        <taxon>Catarrhini</taxon>
        <taxon>Cercopithecidae</taxon>
        <taxon>Cercopithecinae</taxon>
        <taxon>Macaca</taxon>
    </lineage>
</organism>
<evidence type="ECO:0000250" key="1"/>
<evidence type="ECO:0000250" key="2">
    <source>
        <dbReference type="UniProtKB" id="P08515"/>
    </source>
</evidence>
<evidence type="ECO:0000250" key="3">
    <source>
        <dbReference type="UniProtKB" id="P21266"/>
    </source>
</evidence>
<evidence type="ECO:0000305" key="4"/>
<proteinExistence type="evidence at transcript level"/>
<keyword id="KW-0963">Cytoplasm</keyword>
<keyword id="KW-1017">Isopeptide bond</keyword>
<keyword id="KW-0808">Transferase</keyword>
<keyword id="KW-0832">Ubl conjugation</keyword>
<comment type="function">
    <text evidence="1">Conjugation of reduced glutathione to a wide number of exogenous and endogenous hydrophobic electrophiles. May govern uptake and detoxification of both endogenous compounds and xenobiotics at the testis and brain blood barriers (By similarity).</text>
</comment>
<comment type="catalytic activity">
    <reaction>
        <text>RX + glutathione = an S-substituted glutathione + a halide anion + H(+)</text>
        <dbReference type="Rhea" id="RHEA:16437"/>
        <dbReference type="ChEBI" id="CHEBI:15378"/>
        <dbReference type="ChEBI" id="CHEBI:16042"/>
        <dbReference type="ChEBI" id="CHEBI:17792"/>
        <dbReference type="ChEBI" id="CHEBI:57925"/>
        <dbReference type="ChEBI" id="CHEBI:90779"/>
        <dbReference type="EC" id="2.5.1.18"/>
    </reaction>
</comment>
<comment type="subunit">
    <text evidence="1">Homodimer.</text>
</comment>
<comment type="subcellular location">
    <subcellularLocation>
        <location evidence="1">Cytoplasm</location>
    </subcellularLocation>
</comment>
<comment type="similarity">
    <text evidence="4">Belongs to the GST superfamily. Mu family.</text>
</comment>